<name>ACUR_CERS4</name>
<protein>
    <recommendedName>
        <fullName>Transcriptional regulator AcuR</fullName>
    </recommendedName>
</protein>
<gene>
    <name type="primary">acuR</name>
    <name type="ordered locus">RHOS4_00080</name>
    <name type="ORF">RSP_1435</name>
</gene>
<sequence length="219" mass="24505">MPLTDTPPSVPQKPRRGRPRGAPDASLAHQSLIRAGLEHLTEKGYSSVGVDEILKAARVPKGSFYHYFRNKADFGLALIEAYDTYFARLLDQAFLDGSLAPLARLRLFTRMAEEGMARHGFRRGCLVGNLGQEMGALPDDFRAALIGVLETWQRRTAQLFREAQACGELSADHDPDALAEAFWIGWEGAILRAKLELRPDPLHSFTRTFGRHFVTRTQE</sequence>
<dbReference type="EMBL" id="CP000143">
    <property type="protein sequence ID" value="ABA77576.1"/>
    <property type="molecule type" value="Genomic_DNA"/>
</dbReference>
<dbReference type="RefSeq" id="WP_011336736.1">
    <property type="nucleotide sequence ID" value="NC_007493.2"/>
</dbReference>
<dbReference type="RefSeq" id="YP_351477.1">
    <property type="nucleotide sequence ID" value="NC_007493.2"/>
</dbReference>
<dbReference type="PDB" id="3BRU">
    <property type="method" value="X-ray"/>
    <property type="resolution" value="2.30 A"/>
    <property type="chains" value="A/B=1-219"/>
</dbReference>
<dbReference type="PDBsum" id="3BRU"/>
<dbReference type="SMR" id="Q3J6K8"/>
<dbReference type="STRING" id="272943.RSP_1435"/>
<dbReference type="EnsemblBacteria" id="ABA77576">
    <property type="protein sequence ID" value="ABA77576"/>
    <property type="gene ID" value="RSP_1435"/>
</dbReference>
<dbReference type="GeneID" id="3718802"/>
<dbReference type="KEGG" id="rsp:RSP_1435"/>
<dbReference type="PATRIC" id="fig|272943.9.peg.299"/>
<dbReference type="eggNOG" id="COG1309">
    <property type="taxonomic scope" value="Bacteria"/>
</dbReference>
<dbReference type="OrthoDB" id="9811084at2"/>
<dbReference type="PhylomeDB" id="Q3J6K8"/>
<dbReference type="EvolutionaryTrace" id="Q3J6K8"/>
<dbReference type="Proteomes" id="UP000002703">
    <property type="component" value="Chromosome 1"/>
</dbReference>
<dbReference type="GO" id="GO:0003677">
    <property type="term" value="F:DNA binding"/>
    <property type="evidence" value="ECO:0007669"/>
    <property type="project" value="UniProtKB-KW"/>
</dbReference>
<dbReference type="Gene3D" id="1.10.357.10">
    <property type="entry name" value="Tetracycline Repressor, domain 2"/>
    <property type="match status" value="1"/>
</dbReference>
<dbReference type="InterPro" id="IPR009057">
    <property type="entry name" value="Homeodomain-like_sf"/>
</dbReference>
<dbReference type="InterPro" id="IPR001647">
    <property type="entry name" value="HTH_TetR"/>
</dbReference>
<dbReference type="InterPro" id="IPR036271">
    <property type="entry name" value="Tet_transcr_reg_TetR-rel_C_sf"/>
</dbReference>
<dbReference type="InterPro" id="IPR011075">
    <property type="entry name" value="TetR_C"/>
</dbReference>
<dbReference type="PANTHER" id="PTHR47506:SF6">
    <property type="entry name" value="HTH-TYPE TRANSCRIPTIONAL REPRESSOR NEMR"/>
    <property type="match status" value="1"/>
</dbReference>
<dbReference type="PANTHER" id="PTHR47506">
    <property type="entry name" value="TRANSCRIPTIONAL REGULATORY PROTEIN"/>
    <property type="match status" value="1"/>
</dbReference>
<dbReference type="Pfam" id="PF16925">
    <property type="entry name" value="TetR_C_13"/>
    <property type="match status" value="1"/>
</dbReference>
<dbReference type="Pfam" id="PF00440">
    <property type="entry name" value="TetR_N"/>
    <property type="match status" value="1"/>
</dbReference>
<dbReference type="PRINTS" id="PR00455">
    <property type="entry name" value="HTHTETR"/>
</dbReference>
<dbReference type="SUPFAM" id="SSF46689">
    <property type="entry name" value="Homeodomain-like"/>
    <property type="match status" value="1"/>
</dbReference>
<dbReference type="SUPFAM" id="SSF48498">
    <property type="entry name" value="Tetracyclin repressor-like, C-terminal domain"/>
    <property type="match status" value="1"/>
</dbReference>
<dbReference type="PROSITE" id="PS50977">
    <property type="entry name" value="HTH_TETR_2"/>
    <property type="match status" value="1"/>
</dbReference>
<comment type="function">
    <text evidence="3">A transcriptional repressor for its operon. Probably binds to 2 operator sequences in the promoter.</text>
</comment>
<comment type="induction">
    <text evidence="3">Strongly induced by acrylate, the operon product (20-fold), and dimethylsulfoniopropionate, the operon substrate (DMSP, 10-fold). Part of the acuR-acuI-dddL operon.</text>
</comment>
<comment type="disruption phenotype">
    <text evidence="3">Loss of repression of its operon.</text>
</comment>
<feature type="chain" id="PRO_0000420619" description="Transcriptional regulator AcuR">
    <location>
        <begin position="1"/>
        <end position="219"/>
    </location>
</feature>
<feature type="domain" description="HTH tetR-type" evidence="1">
    <location>
        <begin position="26"/>
        <end position="86"/>
    </location>
</feature>
<feature type="DNA-binding region" description="H-T-H motif" evidence="1">
    <location>
        <begin position="49"/>
        <end position="68"/>
    </location>
</feature>
<feature type="region of interest" description="Disordered" evidence="2">
    <location>
        <begin position="1"/>
        <end position="25"/>
    </location>
</feature>
<feature type="helix" evidence="4">
    <location>
        <begin position="25"/>
        <end position="27"/>
    </location>
</feature>
<feature type="helix" evidence="4">
    <location>
        <begin position="28"/>
        <end position="42"/>
    </location>
</feature>
<feature type="turn" evidence="4">
    <location>
        <begin position="45"/>
        <end position="47"/>
    </location>
</feature>
<feature type="helix" evidence="4">
    <location>
        <begin position="50"/>
        <end position="57"/>
    </location>
</feature>
<feature type="helix" evidence="4">
    <location>
        <begin position="61"/>
        <end position="67"/>
    </location>
</feature>
<feature type="helix" evidence="4">
    <location>
        <begin position="71"/>
        <end position="94"/>
    </location>
</feature>
<feature type="helix" evidence="4">
    <location>
        <begin position="101"/>
        <end position="117"/>
    </location>
</feature>
<feature type="turn" evidence="4">
    <location>
        <begin position="118"/>
        <end position="121"/>
    </location>
</feature>
<feature type="helix" evidence="4">
    <location>
        <begin position="126"/>
        <end position="132"/>
    </location>
</feature>
<feature type="helix" evidence="4">
    <location>
        <begin position="134"/>
        <end position="136"/>
    </location>
</feature>
<feature type="helix" evidence="4">
    <location>
        <begin position="141"/>
        <end position="164"/>
    </location>
</feature>
<feature type="turn" evidence="4">
    <location>
        <begin position="165"/>
        <end position="167"/>
    </location>
</feature>
<feature type="helix" evidence="4">
    <location>
        <begin position="175"/>
        <end position="196"/>
    </location>
</feature>
<feature type="helix" evidence="4">
    <location>
        <begin position="200"/>
        <end position="209"/>
    </location>
</feature>
<feature type="helix" evidence="4">
    <location>
        <begin position="210"/>
        <end position="212"/>
    </location>
</feature>
<organism>
    <name type="scientific">Cereibacter sphaeroides (strain ATCC 17023 / DSM 158 / JCM 6121 / CCUG 31486 / LMG 2827 / NBRC 12203 / NCIMB 8253 / ATH 2.4.1.)</name>
    <name type="common">Rhodobacter sphaeroides</name>
    <dbReference type="NCBI Taxonomy" id="272943"/>
    <lineage>
        <taxon>Bacteria</taxon>
        <taxon>Pseudomonadati</taxon>
        <taxon>Pseudomonadota</taxon>
        <taxon>Alphaproteobacteria</taxon>
        <taxon>Rhodobacterales</taxon>
        <taxon>Paracoccaceae</taxon>
        <taxon>Cereibacter</taxon>
    </lineage>
</organism>
<evidence type="ECO:0000255" key="1">
    <source>
        <dbReference type="PROSITE-ProRule" id="PRU00335"/>
    </source>
</evidence>
<evidence type="ECO:0000256" key="2">
    <source>
        <dbReference type="SAM" id="MobiDB-lite"/>
    </source>
</evidence>
<evidence type="ECO:0000269" key="3">
    <source>
    </source>
</evidence>
<evidence type="ECO:0007829" key="4">
    <source>
        <dbReference type="PDB" id="3BRU"/>
    </source>
</evidence>
<reference key="1">
    <citation type="submission" date="2005-09" db="EMBL/GenBank/DDBJ databases">
        <title>Complete sequence of chromosome 1 of Rhodobacter sphaeroides 2.4.1.</title>
        <authorList>
            <person name="Copeland A."/>
            <person name="Lucas S."/>
            <person name="Lapidus A."/>
            <person name="Barry K."/>
            <person name="Detter J.C."/>
            <person name="Glavina T."/>
            <person name="Hammon N."/>
            <person name="Israni S."/>
            <person name="Pitluck S."/>
            <person name="Richardson P."/>
            <person name="Mackenzie C."/>
            <person name="Choudhary M."/>
            <person name="Larimer F."/>
            <person name="Hauser L.J."/>
            <person name="Land M."/>
            <person name="Donohue T.J."/>
            <person name="Kaplan S."/>
        </authorList>
    </citation>
    <scope>NUCLEOTIDE SEQUENCE [LARGE SCALE GENOMIC DNA]</scope>
    <source>
        <strain>ATCC 17023 / DSM 158 / JCM 6121 / CCUG 31486 / LMG 2827 / NBRC 12203 / NCIMB 8253 / ATH 2.4.1.</strain>
    </source>
</reference>
<reference key="2">
    <citation type="journal article" date="2011" name="PLoS ONE">
        <title>Unusual regulation of a leaderless operon involved in the catabolism of dimethylsulfoniopropionate in Rhodobacter sphaeroides.</title>
        <authorList>
            <person name="Sullivan M.J."/>
            <person name="Curson A.R."/>
            <person name="Shearer N."/>
            <person name="Todd J.D."/>
            <person name="Green R.T."/>
            <person name="Johnston A.W."/>
        </authorList>
    </citation>
    <scope>FUNCTION</scope>
    <scope>INDUCTION</scope>
    <scope>DISRUPTION PHENOTYPE</scope>
    <source>
        <strain>ATCC 17023 / DSM 158 / JCM 6121 / CCUG 31486 / LMG 2827 / NBRC 12203 / NCIMB 8253 / ATH 2.4.1.</strain>
    </source>
</reference>
<reference key="3">
    <citation type="submission" date="2007-12" db="PDB data bank">
        <title>Crystal structure of regulatory protein TetR from Rhodobacter sphaeroides.</title>
        <authorList>
            <person name="Osipiuk J."/>
            <person name="Maltseva N."/>
            <person name="Freeman L."/>
            <person name="Joachimiak A."/>
        </authorList>
    </citation>
    <scope>X-RAY CRYSTALLOGRAPHY (2.30 ANGSTROMS)</scope>
    <source>
        <strain>ATCC 17023 / DSM 158 / JCM 6121 / CCUG 31486 / LMG 2827 / NBRC 12203 / NCIMB 8253 / ATH 2.4.1.</strain>
    </source>
</reference>
<proteinExistence type="evidence at protein level"/>
<accession>Q3J6K8</accession>
<keyword id="KW-0002">3D-structure</keyword>
<keyword id="KW-0238">DNA-binding</keyword>
<keyword id="KW-1185">Reference proteome</keyword>
<keyword id="KW-0678">Repressor</keyword>
<keyword id="KW-0804">Transcription</keyword>
<keyword id="KW-0805">Transcription regulation</keyword>